<gene>
    <name evidence="3" type="primary">dam</name>
</gene>
<dbReference type="EC" id="2.1.1.72"/>
<dbReference type="EMBL" id="X78412">
    <property type="protein sequence ID" value="CAA55177.1"/>
    <property type="molecule type" value="Genomic_DNA"/>
</dbReference>
<dbReference type="PIR" id="S47099">
    <property type="entry name" value="S47099"/>
</dbReference>
<dbReference type="RefSeq" id="WP_033651736.1">
    <property type="nucleotide sequence ID" value="NZ_VTUT01000009.1"/>
</dbReference>
<dbReference type="SMR" id="P45454"/>
<dbReference type="STRING" id="273526.SMDB11_3848"/>
<dbReference type="REBASE" id="3001">
    <property type="entry name" value="M.SmaII"/>
</dbReference>
<dbReference type="GO" id="GO:1904047">
    <property type="term" value="F:S-adenosyl-L-methionine binding"/>
    <property type="evidence" value="ECO:0007669"/>
    <property type="project" value="TreeGrafter"/>
</dbReference>
<dbReference type="GO" id="GO:0043565">
    <property type="term" value="F:sequence-specific DNA binding"/>
    <property type="evidence" value="ECO:0007669"/>
    <property type="project" value="TreeGrafter"/>
</dbReference>
<dbReference type="GO" id="GO:0009007">
    <property type="term" value="F:site-specific DNA-methyltransferase (adenine-specific) activity"/>
    <property type="evidence" value="ECO:0007669"/>
    <property type="project" value="UniProtKB-EC"/>
</dbReference>
<dbReference type="GO" id="GO:0006260">
    <property type="term" value="P:DNA replication"/>
    <property type="evidence" value="ECO:0007669"/>
    <property type="project" value="UniProtKB-KW"/>
</dbReference>
<dbReference type="GO" id="GO:0009307">
    <property type="term" value="P:DNA restriction-modification system"/>
    <property type="evidence" value="ECO:0007669"/>
    <property type="project" value="InterPro"/>
</dbReference>
<dbReference type="GO" id="GO:0032259">
    <property type="term" value="P:methylation"/>
    <property type="evidence" value="ECO:0007669"/>
    <property type="project" value="UniProtKB-KW"/>
</dbReference>
<dbReference type="GO" id="GO:0006298">
    <property type="term" value="P:mismatch repair"/>
    <property type="evidence" value="ECO:0007669"/>
    <property type="project" value="TreeGrafter"/>
</dbReference>
<dbReference type="FunFam" id="1.10.1020.10:FF:000001">
    <property type="entry name" value="Site-specific DNA-methyltransferase (adenine-specific)"/>
    <property type="match status" value="1"/>
</dbReference>
<dbReference type="Gene3D" id="1.10.1020.10">
    <property type="entry name" value="Adenine-specific Methyltransferase, Domain 2"/>
    <property type="match status" value="1"/>
</dbReference>
<dbReference type="Gene3D" id="3.40.50.150">
    <property type="entry name" value="Vaccinia Virus protein VP39"/>
    <property type="match status" value="1"/>
</dbReference>
<dbReference type="InterPro" id="IPR023095">
    <property type="entry name" value="Ade_MeTrfase_dom_2"/>
</dbReference>
<dbReference type="InterPro" id="IPR002052">
    <property type="entry name" value="DNA_methylase_N6_adenine_CS"/>
</dbReference>
<dbReference type="InterPro" id="IPR012263">
    <property type="entry name" value="M_m6A_EcoRV"/>
</dbReference>
<dbReference type="InterPro" id="IPR012327">
    <property type="entry name" value="MeTrfase_D12"/>
</dbReference>
<dbReference type="InterPro" id="IPR029063">
    <property type="entry name" value="SAM-dependent_MTases_sf"/>
</dbReference>
<dbReference type="NCBIfam" id="TIGR00571">
    <property type="entry name" value="dam"/>
    <property type="match status" value="1"/>
</dbReference>
<dbReference type="NCBIfam" id="NF008152">
    <property type="entry name" value="PRK10904.1"/>
    <property type="match status" value="1"/>
</dbReference>
<dbReference type="PANTHER" id="PTHR30481">
    <property type="entry name" value="DNA ADENINE METHYLASE"/>
    <property type="match status" value="1"/>
</dbReference>
<dbReference type="PANTHER" id="PTHR30481:SF3">
    <property type="entry name" value="DNA ADENINE METHYLASE"/>
    <property type="match status" value="1"/>
</dbReference>
<dbReference type="Pfam" id="PF02086">
    <property type="entry name" value="MethyltransfD12"/>
    <property type="match status" value="1"/>
</dbReference>
<dbReference type="PIRSF" id="PIRSF000398">
    <property type="entry name" value="M_m6A_EcoRV"/>
    <property type="match status" value="1"/>
</dbReference>
<dbReference type="PRINTS" id="PR00505">
    <property type="entry name" value="D12N6MTFRASE"/>
</dbReference>
<dbReference type="SUPFAM" id="SSF53335">
    <property type="entry name" value="S-adenosyl-L-methionine-dependent methyltransferases"/>
    <property type="match status" value="1"/>
</dbReference>
<dbReference type="PROSITE" id="PS00092">
    <property type="entry name" value="N6_MTASE"/>
    <property type="match status" value="1"/>
</dbReference>
<protein>
    <recommendedName>
        <fullName>DNA adenine methylase</fullName>
        <ecNumber>2.1.1.72</ecNumber>
    </recommendedName>
    <alternativeName>
        <fullName>DNA adenine methyltransferase</fullName>
    </alternativeName>
    <alternativeName>
        <fullName>Deoxyadenosyl-methyltransferase</fullName>
    </alternativeName>
    <alternativeName>
        <fullName evidence="4">Orphan methyltransferase M.SmaII</fullName>
        <shortName evidence="4">M.SmaII</shortName>
    </alternativeName>
</protein>
<reference key="1">
    <citation type="journal article" date="1999" name="J. Bacteriol.">
        <title>Characterization of a dam mutant of Serratia marcescens and nucleotide sequence of the dam region.</title>
        <authorList>
            <person name="Ostendorf T."/>
            <person name="Cherepanov P."/>
            <person name="de Vries J."/>
            <person name="Wackernagel W."/>
        </authorList>
    </citation>
    <scope>NUCLEOTIDE SEQUENCE [GENOMIC DNA]</scope>
    <scope>FUNCTION</scope>
    <scope>DISRUPTION PHENOTYPE</scope>
    <source>
        <strain>Sr41</strain>
    </source>
</reference>
<reference key="2">
    <citation type="journal article" date="2003" name="Nucleic Acids Res.">
        <title>A nomenclature for restriction enzymes, DNA methyltransferases, homing endonucleases and their genes.</title>
        <authorList>
            <person name="Roberts R.J."/>
            <person name="Belfort M."/>
            <person name="Bestor T."/>
            <person name="Bhagwat A.S."/>
            <person name="Bickle T.A."/>
            <person name="Bitinaite J."/>
            <person name="Blumenthal R.M."/>
            <person name="Degtyarev S.K."/>
            <person name="Dryden D.T."/>
            <person name="Dybvig K."/>
            <person name="Firman K."/>
            <person name="Gromova E.S."/>
            <person name="Gumport R.I."/>
            <person name="Halford S.E."/>
            <person name="Hattman S."/>
            <person name="Heitman J."/>
            <person name="Hornby D.P."/>
            <person name="Janulaitis A."/>
            <person name="Jeltsch A."/>
            <person name="Josephsen J."/>
            <person name="Kiss A."/>
            <person name="Klaenhammer T.R."/>
            <person name="Kobayashi I."/>
            <person name="Kong H."/>
            <person name="Krueger D.H."/>
            <person name="Lacks S."/>
            <person name="Marinus M.G."/>
            <person name="Miyahara M."/>
            <person name="Morgan R.D."/>
            <person name="Murray N.E."/>
            <person name="Nagaraja V."/>
            <person name="Piekarowicz A."/>
            <person name="Pingoud A."/>
            <person name="Raleigh E."/>
            <person name="Rao D.N."/>
            <person name="Reich N."/>
            <person name="Repin V.E."/>
            <person name="Selker E.U."/>
            <person name="Shaw P.C."/>
            <person name="Stein D.C."/>
            <person name="Stoddard B.L."/>
            <person name="Szybalski W."/>
            <person name="Trautner T.A."/>
            <person name="Van Etten J.L."/>
            <person name="Vitor J.M."/>
            <person name="Wilson G.G."/>
            <person name="Xu S.Y."/>
        </authorList>
    </citation>
    <scope>NOMENCLATURE</scope>
    <scope>SUBTYPE</scope>
</reference>
<organism>
    <name type="scientific">Serratia marcescens</name>
    <dbReference type="NCBI Taxonomy" id="615"/>
    <lineage>
        <taxon>Bacteria</taxon>
        <taxon>Pseudomonadati</taxon>
        <taxon>Pseudomonadota</taxon>
        <taxon>Gammaproteobacteria</taxon>
        <taxon>Enterobacterales</taxon>
        <taxon>Yersiniaceae</taxon>
        <taxon>Serratia</taxon>
    </lineage>
</organism>
<name>DMA_SERMA</name>
<keyword id="KW-0235">DNA replication</keyword>
<keyword id="KW-0238">DNA-binding</keyword>
<keyword id="KW-0489">Methyltransferase</keyword>
<keyword id="KW-0949">S-adenosyl-L-methionine</keyword>
<keyword id="KW-0808">Transferase</keyword>
<sequence>MKKNRAFLKWAGGKYPLVDEIRRHLPAGDCLIEPFVGAGSVFLNTDYDAYILADINSDLINLYNIVKLRTDDFVRDARTLFADEFNNSDQFYLLREEFNTSTEPYRRALLFLYLNRHCYNGLCRYNLRGEFNVPFGRYKKPYFPEEELYWFAEKSRNATFVCEHYRDTMAKAAAGAVVYCDPPYAPLSATANFTAYHTNSFSIADQQSLAHLAHQLSVESRVPVLISNHDTELTRDWYQHAALYVVKARRTISRNILGRSKVNELLALYR</sequence>
<comment type="function">
    <text evidence="2 4 6">An alpha subtype methylase, recognizes the double-stranded sequence 5'-GATC-3' and methylates A-2 (Probable) (PubMed:12654995). Overexpression leads to hypermutability (PubMed:10383952). May be involved in methyl-directed DNA mismatch repair, initiation of chromosome replication and gene expression (Probable).</text>
</comment>
<comment type="catalytic activity">
    <reaction>
        <text>a 2'-deoxyadenosine in DNA + S-adenosyl-L-methionine = an N(6)-methyl-2'-deoxyadenosine in DNA + S-adenosyl-L-homocysteine + H(+)</text>
        <dbReference type="Rhea" id="RHEA:15197"/>
        <dbReference type="Rhea" id="RHEA-COMP:12418"/>
        <dbReference type="Rhea" id="RHEA-COMP:12419"/>
        <dbReference type="ChEBI" id="CHEBI:15378"/>
        <dbReference type="ChEBI" id="CHEBI:57856"/>
        <dbReference type="ChEBI" id="CHEBI:59789"/>
        <dbReference type="ChEBI" id="CHEBI:90615"/>
        <dbReference type="ChEBI" id="CHEBI:90616"/>
        <dbReference type="EC" id="2.1.1.72"/>
    </reaction>
</comment>
<comment type="disruption phenotype">
    <text evidence="2">Loss of N6-adenine methylation of 5'-GATC-3' sequences, more sensitive to multiple mutagenic agents.</text>
</comment>
<comment type="similarity">
    <text evidence="5">Belongs to the N(4)/N(6)-methyltransferase family.</text>
</comment>
<accession>P45454</accession>
<feature type="chain" id="PRO_0000087997" description="DNA adenine methylase">
    <location>
        <begin position="1"/>
        <end position="270"/>
    </location>
</feature>
<feature type="binding site" evidence="1">
    <location>
        <position position="10"/>
    </location>
    <ligand>
        <name>S-adenosyl-L-methionine</name>
        <dbReference type="ChEBI" id="CHEBI:59789"/>
    </ligand>
</feature>
<feature type="binding site" evidence="1">
    <location>
        <position position="14"/>
    </location>
    <ligand>
        <name>S-adenosyl-L-methionine</name>
        <dbReference type="ChEBI" id="CHEBI:59789"/>
    </ligand>
</feature>
<feature type="binding site" evidence="1">
    <location>
        <position position="54"/>
    </location>
    <ligand>
        <name>S-adenosyl-L-methionine</name>
        <dbReference type="ChEBI" id="CHEBI:59789"/>
    </ligand>
</feature>
<feature type="binding site" evidence="1">
    <location>
        <position position="181"/>
    </location>
    <ligand>
        <name>S-adenosyl-L-methionine</name>
        <dbReference type="ChEBI" id="CHEBI:59789"/>
    </ligand>
</feature>
<proteinExistence type="inferred from homology"/>
<evidence type="ECO:0000250" key="1"/>
<evidence type="ECO:0000269" key="2">
    <source>
    </source>
</evidence>
<evidence type="ECO:0000303" key="3">
    <source>
    </source>
</evidence>
<evidence type="ECO:0000303" key="4">
    <source>
    </source>
</evidence>
<evidence type="ECO:0000305" key="5"/>
<evidence type="ECO:0000305" key="6">
    <source>
    </source>
</evidence>